<accession>Q9QYJ0</accession>
<dbReference type="EMBL" id="AB028853">
    <property type="protein sequence ID" value="BAA88301.1"/>
    <property type="molecule type" value="mRNA"/>
</dbReference>
<dbReference type="EMBL" id="AK077672">
    <property type="protein sequence ID" value="BAC36946.1"/>
    <property type="molecule type" value="mRNA"/>
</dbReference>
<dbReference type="EMBL" id="AK083208">
    <property type="protein sequence ID" value="BAC38809.1"/>
    <property type="molecule type" value="mRNA"/>
</dbReference>
<dbReference type="EMBL" id="BC003420">
    <property type="protein sequence ID" value="AAH03420.1"/>
    <property type="molecule type" value="mRNA"/>
</dbReference>
<dbReference type="CCDS" id="CCDS22500.1"/>
<dbReference type="RefSeq" id="NP_062768.1">
    <property type="nucleotide sequence ID" value="NM_019794.5"/>
</dbReference>
<dbReference type="SMR" id="Q9QYJ0"/>
<dbReference type="BioGRID" id="207986">
    <property type="interactions" value="23"/>
</dbReference>
<dbReference type="FunCoup" id="Q9QYJ0">
    <property type="interactions" value="4183"/>
</dbReference>
<dbReference type="IntAct" id="Q9QYJ0">
    <property type="interactions" value="8"/>
</dbReference>
<dbReference type="MINT" id="Q9QYJ0"/>
<dbReference type="STRING" id="10090.ENSMUSP00000034138"/>
<dbReference type="GlyGen" id="Q9QYJ0">
    <property type="glycosylation" value="2 sites, 1 N-linked glycan (1 site), 1 O-linked glycan (1 site)"/>
</dbReference>
<dbReference type="iPTMnet" id="Q9QYJ0"/>
<dbReference type="PhosphoSitePlus" id="Q9QYJ0"/>
<dbReference type="SwissPalm" id="Q9QYJ0"/>
<dbReference type="jPOST" id="Q9QYJ0"/>
<dbReference type="PaxDb" id="10090-ENSMUSP00000034138"/>
<dbReference type="PeptideAtlas" id="Q9QYJ0"/>
<dbReference type="ProteomicsDB" id="279742"/>
<dbReference type="Pumba" id="Q9QYJ0"/>
<dbReference type="Antibodypedia" id="28078">
    <property type="antibodies" value="413 antibodies from 31 providers"/>
</dbReference>
<dbReference type="DNASU" id="56445"/>
<dbReference type="Ensembl" id="ENSMUST00000034138.7">
    <property type="protein sequence ID" value="ENSMUSP00000034138.6"/>
    <property type="gene ID" value="ENSMUSG00000031701.7"/>
</dbReference>
<dbReference type="GeneID" id="56445"/>
<dbReference type="KEGG" id="mmu:56445"/>
<dbReference type="UCSC" id="uc009mqa.1">
    <property type="organism name" value="mouse"/>
</dbReference>
<dbReference type="AGR" id="MGI:1931882"/>
<dbReference type="CTD" id="10294"/>
<dbReference type="MGI" id="MGI:1931882">
    <property type="gene designation" value="Dnaja2"/>
</dbReference>
<dbReference type="VEuPathDB" id="HostDB:ENSMUSG00000031701"/>
<dbReference type="eggNOG" id="KOG0712">
    <property type="taxonomic scope" value="Eukaryota"/>
</dbReference>
<dbReference type="GeneTree" id="ENSGT00940000154688"/>
<dbReference type="HOGENOM" id="CLU_017633_10_0_1"/>
<dbReference type="InParanoid" id="Q9QYJ0"/>
<dbReference type="OMA" id="RVCPTCV"/>
<dbReference type="OrthoDB" id="550424at2759"/>
<dbReference type="PhylomeDB" id="Q9QYJ0"/>
<dbReference type="TreeFam" id="TF105141"/>
<dbReference type="Reactome" id="R-MMU-3371497">
    <property type="pathway name" value="HSP90 chaperone cycle for steroid hormone receptors (SHR) in the presence of ligand"/>
</dbReference>
<dbReference type="BioGRID-ORCS" id="56445">
    <property type="hits" value="17 hits in 80 CRISPR screens"/>
</dbReference>
<dbReference type="CD-CODE" id="CE726F99">
    <property type="entry name" value="Postsynaptic density"/>
</dbReference>
<dbReference type="ChiTaRS" id="Dnaja2">
    <property type="organism name" value="mouse"/>
</dbReference>
<dbReference type="PRO" id="PR:Q9QYJ0"/>
<dbReference type="Proteomes" id="UP000000589">
    <property type="component" value="Chromosome 8"/>
</dbReference>
<dbReference type="RNAct" id="Q9QYJ0">
    <property type="molecule type" value="protein"/>
</dbReference>
<dbReference type="Bgee" id="ENSMUSG00000031701">
    <property type="expression patterns" value="Expressed in retinal neural layer and 255 other cell types or tissues"/>
</dbReference>
<dbReference type="GO" id="GO:0005829">
    <property type="term" value="C:cytosol"/>
    <property type="evidence" value="ECO:0007669"/>
    <property type="project" value="Ensembl"/>
</dbReference>
<dbReference type="GO" id="GO:0016020">
    <property type="term" value="C:membrane"/>
    <property type="evidence" value="ECO:0007669"/>
    <property type="project" value="UniProtKB-SubCell"/>
</dbReference>
<dbReference type="GO" id="GO:0005524">
    <property type="term" value="F:ATP binding"/>
    <property type="evidence" value="ECO:0007669"/>
    <property type="project" value="InterPro"/>
</dbReference>
<dbReference type="GO" id="GO:0001671">
    <property type="term" value="F:ATPase activator activity"/>
    <property type="evidence" value="ECO:0000250"/>
    <property type="project" value="UniProtKB"/>
</dbReference>
<dbReference type="GO" id="GO:0030544">
    <property type="term" value="F:Hsp70 protein binding"/>
    <property type="evidence" value="ECO:0007669"/>
    <property type="project" value="InterPro"/>
</dbReference>
<dbReference type="GO" id="GO:0051082">
    <property type="term" value="F:unfolded protein binding"/>
    <property type="evidence" value="ECO:0007669"/>
    <property type="project" value="Ensembl"/>
</dbReference>
<dbReference type="GO" id="GO:0008270">
    <property type="term" value="F:zinc ion binding"/>
    <property type="evidence" value="ECO:0007669"/>
    <property type="project" value="UniProtKB-KW"/>
</dbReference>
<dbReference type="GO" id="GO:0042026">
    <property type="term" value="P:protein refolding"/>
    <property type="evidence" value="ECO:0007669"/>
    <property type="project" value="Ensembl"/>
</dbReference>
<dbReference type="GO" id="GO:0009408">
    <property type="term" value="P:response to heat"/>
    <property type="evidence" value="ECO:0007669"/>
    <property type="project" value="InterPro"/>
</dbReference>
<dbReference type="CDD" id="cd06257">
    <property type="entry name" value="DnaJ"/>
    <property type="match status" value="1"/>
</dbReference>
<dbReference type="CDD" id="cd10747">
    <property type="entry name" value="DnaJ_C"/>
    <property type="match status" value="1"/>
</dbReference>
<dbReference type="CDD" id="cd10719">
    <property type="entry name" value="DnaJ_zf"/>
    <property type="match status" value="1"/>
</dbReference>
<dbReference type="FunFam" id="2.60.260.20:FF:000068">
    <property type="entry name" value="Chaperone protein dnaJ 3"/>
    <property type="match status" value="1"/>
</dbReference>
<dbReference type="FunFam" id="1.10.287.110:FF:000016">
    <property type="entry name" value="DnaJ (Hsp40) homolog, subfamily A, member 2"/>
    <property type="match status" value="1"/>
</dbReference>
<dbReference type="FunFam" id="2.10.230.10:FF:000005">
    <property type="entry name" value="DnaJ homolog subfamily A member 1"/>
    <property type="match status" value="1"/>
</dbReference>
<dbReference type="FunFam" id="2.60.260.20:FF:000003">
    <property type="entry name" value="DnaJ subfamily A member 2"/>
    <property type="match status" value="1"/>
</dbReference>
<dbReference type="Gene3D" id="1.10.287.110">
    <property type="entry name" value="DnaJ domain"/>
    <property type="match status" value="1"/>
</dbReference>
<dbReference type="Gene3D" id="2.10.230.10">
    <property type="entry name" value="Heat shock protein DnaJ, cysteine-rich domain"/>
    <property type="match status" value="1"/>
</dbReference>
<dbReference type="Gene3D" id="2.60.260.20">
    <property type="entry name" value="Urease metallochaperone UreE, N-terminal domain"/>
    <property type="match status" value="2"/>
</dbReference>
<dbReference type="HAMAP" id="MF_01152">
    <property type="entry name" value="DnaJ"/>
    <property type="match status" value="1"/>
</dbReference>
<dbReference type="InterPro" id="IPR012724">
    <property type="entry name" value="DnaJ"/>
</dbReference>
<dbReference type="InterPro" id="IPR002939">
    <property type="entry name" value="DnaJ_C"/>
</dbReference>
<dbReference type="InterPro" id="IPR001623">
    <property type="entry name" value="DnaJ_domain"/>
</dbReference>
<dbReference type="InterPro" id="IPR018253">
    <property type="entry name" value="DnaJ_domain_CS"/>
</dbReference>
<dbReference type="InterPro" id="IPR044713">
    <property type="entry name" value="DNJA1/2-like"/>
</dbReference>
<dbReference type="InterPro" id="IPR008971">
    <property type="entry name" value="HSP40/DnaJ_pept-bd"/>
</dbReference>
<dbReference type="InterPro" id="IPR001305">
    <property type="entry name" value="HSP_DnaJ_Cys-rich_dom"/>
</dbReference>
<dbReference type="InterPro" id="IPR036410">
    <property type="entry name" value="HSP_DnaJ_Cys-rich_dom_sf"/>
</dbReference>
<dbReference type="InterPro" id="IPR036869">
    <property type="entry name" value="J_dom_sf"/>
</dbReference>
<dbReference type="PANTHER" id="PTHR43888">
    <property type="entry name" value="DNAJ-LIKE-2, ISOFORM A-RELATED"/>
    <property type="match status" value="1"/>
</dbReference>
<dbReference type="Pfam" id="PF00226">
    <property type="entry name" value="DnaJ"/>
    <property type="match status" value="1"/>
</dbReference>
<dbReference type="Pfam" id="PF01556">
    <property type="entry name" value="DnaJ_C"/>
    <property type="match status" value="1"/>
</dbReference>
<dbReference type="Pfam" id="PF00684">
    <property type="entry name" value="DnaJ_CXXCXGXG"/>
    <property type="match status" value="1"/>
</dbReference>
<dbReference type="PRINTS" id="PR00625">
    <property type="entry name" value="JDOMAIN"/>
</dbReference>
<dbReference type="SMART" id="SM00271">
    <property type="entry name" value="DnaJ"/>
    <property type="match status" value="1"/>
</dbReference>
<dbReference type="SUPFAM" id="SSF46565">
    <property type="entry name" value="Chaperone J-domain"/>
    <property type="match status" value="1"/>
</dbReference>
<dbReference type="SUPFAM" id="SSF57938">
    <property type="entry name" value="DnaJ/Hsp40 cysteine-rich domain"/>
    <property type="match status" value="1"/>
</dbReference>
<dbReference type="SUPFAM" id="SSF49493">
    <property type="entry name" value="HSP40/DnaJ peptide-binding domain"/>
    <property type="match status" value="2"/>
</dbReference>
<dbReference type="PROSITE" id="PS00636">
    <property type="entry name" value="DNAJ_1"/>
    <property type="match status" value="1"/>
</dbReference>
<dbReference type="PROSITE" id="PS50076">
    <property type="entry name" value="DNAJ_2"/>
    <property type="match status" value="1"/>
</dbReference>
<dbReference type="PROSITE" id="PS51188">
    <property type="entry name" value="ZF_CR"/>
    <property type="match status" value="1"/>
</dbReference>
<comment type="function">
    <text evidence="3">Co-chaperone of Hsc70. Stimulates ATP hydrolysis and the folding of unfolded proteins mediated by HSPA1A/B (in vitro).</text>
</comment>
<comment type="subcellular location">
    <subcellularLocation>
        <location evidence="5">Membrane</location>
        <topology evidence="5">Lipid-anchor</topology>
    </subcellularLocation>
</comment>
<keyword id="KW-0007">Acetylation</keyword>
<keyword id="KW-0143">Chaperone</keyword>
<keyword id="KW-0903">Direct protein sequencing</keyword>
<keyword id="KW-1017">Isopeptide bond</keyword>
<keyword id="KW-0449">Lipoprotein</keyword>
<keyword id="KW-0472">Membrane</keyword>
<keyword id="KW-0479">Metal-binding</keyword>
<keyword id="KW-0488">Methylation</keyword>
<keyword id="KW-0597">Phosphoprotein</keyword>
<keyword id="KW-0636">Prenylation</keyword>
<keyword id="KW-1185">Reference proteome</keyword>
<keyword id="KW-0677">Repeat</keyword>
<keyword id="KW-0832">Ubl conjugation</keyword>
<keyword id="KW-0862">Zinc</keyword>
<keyword id="KW-0863">Zinc-finger</keyword>
<gene>
    <name type="primary">Dnaja2</name>
</gene>
<organism>
    <name type="scientific">Mus musculus</name>
    <name type="common">Mouse</name>
    <dbReference type="NCBI Taxonomy" id="10090"/>
    <lineage>
        <taxon>Eukaryota</taxon>
        <taxon>Metazoa</taxon>
        <taxon>Chordata</taxon>
        <taxon>Craniata</taxon>
        <taxon>Vertebrata</taxon>
        <taxon>Euteleostomi</taxon>
        <taxon>Mammalia</taxon>
        <taxon>Eutheria</taxon>
        <taxon>Euarchontoglires</taxon>
        <taxon>Glires</taxon>
        <taxon>Rodentia</taxon>
        <taxon>Myomorpha</taxon>
        <taxon>Muroidea</taxon>
        <taxon>Muridae</taxon>
        <taxon>Murinae</taxon>
        <taxon>Mus</taxon>
        <taxon>Mus</taxon>
    </lineage>
</organism>
<name>DNJA2_MOUSE</name>
<feature type="chain" id="PRO_0000071012" description="DnaJ homolog subfamily A member 2">
    <location>
        <begin position="1"/>
        <end position="409"/>
    </location>
</feature>
<feature type="propeptide" id="PRO_0000396758" description="Removed in mature form" evidence="1">
    <location>
        <begin position="410"/>
        <end position="412"/>
    </location>
</feature>
<feature type="domain" description="J">
    <location>
        <begin position="8"/>
        <end position="70"/>
    </location>
</feature>
<feature type="repeat" description="CXXCXGXG motif">
    <location>
        <begin position="143"/>
        <end position="150"/>
    </location>
</feature>
<feature type="repeat" description="CXXCXGXG motif">
    <location>
        <begin position="159"/>
        <end position="166"/>
    </location>
</feature>
<feature type="repeat" description="CXXCXGXG motif">
    <location>
        <begin position="186"/>
        <end position="193"/>
    </location>
</feature>
<feature type="repeat" description="CXXCXGXG motif">
    <location>
        <begin position="202"/>
        <end position="209"/>
    </location>
</feature>
<feature type="zinc finger region" description="CR-type">
    <location>
        <begin position="130"/>
        <end position="214"/>
    </location>
</feature>
<feature type="region of interest" description="Disordered" evidence="4">
    <location>
        <begin position="365"/>
        <end position="412"/>
    </location>
</feature>
<feature type="binding site" evidence="1">
    <location>
        <position position="143"/>
    </location>
    <ligand>
        <name>Zn(2+)</name>
        <dbReference type="ChEBI" id="CHEBI:29105"/>
        <label>1</label>
    </ligand>
</feature>
<feature type="binding site" evidence="1">
    <location>
        <position position="146"/>
    </location>
    <ligand>
        <name>Zn(2+)</name>
        <dbReference type="ChEBI" id="CHEBI:29105"/>
        <label>1</label>
    </ligand>
</feature>
<feature type="binding site" evidence="1">
    <location>
        <position position="159"/>
    </location>
    <ligand>
        <name>Zn(2+)</name>
        <dbReference type="ChEBI" id="CHEBI:29105"/>
        <label>2</label>
    </ligand>
</feature>
<feature type="binding site" evidence="1">
    <location>
        <position position="162"/>
    </location>
    <ligand>
        <name>Zn(2+)</name>
        <dbReference type="ChEBI" id="CHEBI:29105"/>
        <label>2</label>
    </ligand>
</feature>
<feature type="binding site" evidence="1">
    <location>
        <position position="186"/>
    </location>
    <ligand>
        <name>Zn(2+)</name>
        <dbReference type="ChEBI" id="CHEBI:29105"/>
        <label>2</label>
    </ligand>
</feature>
<feature type="binding site" evidence="1">
    <location>
        <position position="189"/>
    </location>
    <ligand>
        <name>Zn(2+)</name>
        <dbReference type="ChEBI" id="CHEBI:29105"/>
        <label>2</label>
    </ligand>
</feature>
<feature type="binding site" evidence="1">
    <location>
        <position position="202"/>
    </location>
    <ligand>
        <name>Zn(2+)</name>
        <dbReference type="ChEBI" id="CHEBI:29105"/>
        <label>1</label>
    </ligand>
</feature>
<feature type="binding site" evidence="1">
    <location>
        <position position="205"/>
    </location>
    <ligand>
        <name>Zn(2+)</name>
        <dbReference type="ChEBI" id="CHEBI:29105"/>
        <label>1</label>
    </ligand>
</feature>
<feature type="modified residue" description="N6-acetyllysine" evidence="6">
    <location>
        <position position="39"/>
    </location>
</feature>
<feature type="modified residue" description="Phosphoserine" evidence="3">
    <location>
        <position position="78"/>
    </location>
</feature>
<feature type="modified residue" description="Phosphoserine" evidence="2">
    <location>
        <position position="123"/>
    </location>
</feature>
<feature type="modified residue" description="N6-acetyllysine" evidence="6">
    <location>
        <position position="152"/>
    </location>
</feature>
<feature type="modified residue" description="Phosphotyrosine" evidence="3">
    <location>
        <position position="391"/>
    </location>
</feature>
<feature type="modified residue" description="Phosphoserine" evidence="3">
    <location>
        <position position="394"/>
    </location>
</feature>
<feature type="modified residue" description="Phosphoserine" evidence="3">
    <location>
        <position position="395"/>
    </location>
</feature>
<feature type="modified residue" description="Cysteine methyl ester" evidence="3">
    <location>
        <position position="409"/>
    </location>
</feature>
<feature type="lipid moiety-binding region" description="S-farnesyl cysteine" evidence="3">
    <location>
        <position position="409"/>
    </location>
</feature>
<feature type="cross-link" description="Glycyl lysine isopeptide (Lys-Gly) (interchain with G-Cter in SUMO2)" evidence="3">
    <location>
        <position position="134"/>
    </location>
</feature>
<reference key="1">
    <citation type="journal article" date="2000" name="Cell Stress Chaperones">
        <title>Mammalian HSP40/DNAJ homologs: cloning of novel cDNAs and a proposal for their classification and nomenclature.</title>
        <authorList>
            <person name="Ohtsuka K."/>
            <person name="Hata M."/>
        </authorList>
    </citation>
    <scope>NUCLEOTIDE SEQUENCE [MRNA]</scope>
    <source>
        <strain>C57BL/6J</strain>
    </source>
</reference>
<reference key="2">
    <citation type="journal article" date="2005" name="Science">
        <title>The transcriptional landscape of the mammalian genome.</title>
        <authorList>
            <person name="Carninci P."/>
            <person name="Kasukawa T."/>
            <person name="Katayama S."/>
            <person name="Gough J."/>
            <person name="Frith M.C."/>
            <person name="Maeda N."/>
            <person name="Oyama R."/>
            <person name="Ravasi T."/>
            <person name="Lenhard B."/>
            <person name="Wells C."/>
            <person name="Kodzius R."/>
            <person name="Shimokawa K."/>
            <person name="Bajic V.B."/>
            <person name="Brenner S.E."/>
            <person name="Batalov S."/>
            <person name="Forrest A.R."/>
            <person name="Zavolan M."/>
            <person name="Davis M.J."/>
            <person name="Wilming L.G."/>
            <person name="Aidinis V."/>
            <person name="Allen J.E."/>
            <person name="Ambesi-Impiombato A."/>
            <person name="Apweiler R."/>
            <person name="Aturaliya R.N."/>
            <person name="Bailey T.L."/>
            <person name="Bansal M."/>
            <person name="Baxter L."/>
            <person name="Beisel K.W."/>
            <person name="Bersano T."/>
            <person name="Bono H."/>
            <person name="Chalk A.M."/>
            <person name="Chiu K.P."/>
            <person name="Choudhary V."/>
            <person name="Christoffels A."/>
            <person name="Clutterbuck D.R."/>
            <person name="Crowe M.L."/>
            <person name="Dalla E."/>
            <person name="Dalrymple B.P."/>
            <person name="de Bono B."/>
            <person name="Della Gatta G."/>
            <person name="di Bernardo D."/>
            <person name="Down T."/>
            <person name="Engstrom P."/>
            <person name="Fagiolini M."/>
            <person name="Faulkner G."/>
            <person name="Fletcher C.F."/>
            <person name="Fukushima T."/>
            <person name="Furuno M."/>
            <person name="Futaki S."/>
            <person name="Gariboldi M."/>
            <person name="Georgii-Hemming P."/>
            <person name="Gingeras T.R."/>
            <person name="Gojobori T."/>
            <person name="Green R.E."/>
            <person name="Gustincich S."/>
            <person name="Harbers M."/>
            <person name="Hayashi Y."/>
            <person name="Hensch T.K."/>
            <person name="Hirokawa N."/>
            <person name="Hill D."/>
            <person name="Huminiecki L."/>
            <person name="Iacono M."/>
            <person name="Ikeo K."/>
            <person name="Iwama A."/>
            <person name="Ishikawa T."/>
            <person name="Jakt M."/>
            <person name="Kanapin A."/>
            <person name="Katoh M."/>
            <person name="Kawasawa Y."/>
            <person name="Kelso J."/>
            <person name="Kitamura H."/>
            <person name="Kitano H."/>
            <person name="Kollias G."/>
            <person name="Krishnan S.P."/>
            <person name="Kruger A."/>
            <person name="Kummerfeld S.K."/>
            <person name="Kurochkin I.V."/>
            <person name="Lareau L.F."/>
            <person name="Lazarevic D."/>
            <person name="Lipovich L."/>
            <person name="Liu J."/>
            <person name="Liuni S."/>
            <person name="McWilliam S."/>
            <person name="Madan Babu M."/>
            <person name="Madera M."/>
            <person name="Marchionni L."/>
            <person name="Matsuda H."/>
            <person name="Matsuzawa S."/>
            <person name="Miki H."/>
            <person name="Mignone F."/>
            <person name="Miyake S."/>
            <person name="Morris K."/>
            <person name="Mottagui-Tabar S."/>
            <person name="Mulder N."/>
            <person name="Nakano N."/>
            <person name="Nakauchi H."/>
            <person name="Ng P."/>
            <person name="Nilsson R."/>
            <person name="Nishiguchi S."/>
            <person name="Nishikawa S."/>
            <person name="Nori F."/>
            <person name="Ohara O."/>
            <person name="Okazaki Y."/>
            <person name="Orlando V."/>
            <person name="Pang K.C."/>
            <person name="Pavan W.J."/>
            <person name="Pavesi G."/>
            <person name="Pesole G."/>
            <person name="Petrovsky N."/>
            <person name="Piazza S."/>
            <person name="Reed J."/>
            <person name="Reid J.F."/>
            <person name="Ring B.Z."/>
            <person name="Ringwald M."/>
            <person name="Rost B."/>
            <person name="Ruan Y."/>
            <person name="Salzberg S.L."/>
            <person name="Sandelin A."/>
            <person name="Schneider C."/>
            <person name="Schoenbach C."/>
            <person name="Sekiguchi K."/>
            <person name="Semple C.A."/>
            <person name="Seno S."/>
            <person name="Sessa L."/>
            <person name="Sheng Y."/>
            <person name="Shibata Y."/>
            <person name="Shimada H."/>
            <person name="Shimada K."/>
            <person name="Silva D."/>
            <person name="Sinclair B."/>
            <person name="Sperling S."/>
            <person name="Stupka E."/>
            <person name="Sugiura K."/>
            <person name="Sultana R."/>
            <person name="Takenaka Y."/>
            <person name="Taki K."/>
            <person name="Tammoja K."/>
            <person name="Tan S.L."/>
            <person name="Tang S."/>
            <person name="Taylor M.S."/>
            <person name="Tegner J."/>
            <person name="Teichmann S.A."/>
            <person name="Ueda H.R."/>
            <person name="van Nimwegen E."/>
            <person name="Verardo R."/>
            <person name="Wei C.L."/>
            <person name="Yagi K."/>
            <person name="Yamanishi H."/>
            <person name="Zabarovsky E."/>
            <person name="Zhu S."/>
            <person name="Zimmer A."/>
            <person name="Hide W."/>
            <person name="Bult C."/>
            <person name="Grimmond S.M."/>
            <person name="Teasdale R.D."/>
            <person name="Liu E.T."/>
            <person name="Brusic V."/>
            <person name="Quackenbush J."/>
            <person name="Wahlestedt C."/>
            <person name="Mattick J.S."/>
            <person name="Hume D.A."/>
            <person name="Kai C."/>
            <person name="Sasaki D."/>
            <person name="Tomaru Y."/>
            <person name="Fukuda S."/>
            <person name="Kanamori-Katayama M."/>
            <person name="Suzuki M."/>
            <person name="Aoki J."/>
            <person name="Arakawa T."/>
            <person name="Iida J."/>
            <person name="Imamura K."/>
            <person name="Itoh M."/>
            <person name="Kato T."/>
            <person name="Kawaji H."/>
            <person name="Kawagashira N."/>
            <person name="Kawashima T."/>
            <person name="Kojima M."/>
            <person name="Kondo S."/>
            <person name="Konno H."/>
            <person name="Nakano K."/>
            <person name="Ninomiya N."/>
            <person name="Nishio T."/>
            <person name="Okada M."/>
            <person name="Plessy C."/>
            <person name="Shibata K."/>
            <person name="Shiraki T."/>
            <person name="Suzuki S."/>
            <person name="Tagami M."/>
            <person name="Waki K."/>
            <person name="Watahiki A."/>
            <person name="Okamura-Oho Y."/>
            <person name="Suzuki H."/>
            <person name="Kawai J."/>
            <person name="Hayashizaki Y."/>
        </authorList>
    </citation>
    <scope>NUCLEOTIDE SEQUENCE [LARGE SCALE MRNA]</scope>
    <source>
        <strain>C57BL/6J</strain>
        <tissue>Hippocampus</tissue>
    </source>
</reference>
<reference key="3">
    <citation type="journal article" date="2004" name="Genome Res.">
        <title>The status, quality, and expansion of the NIH full-length cDNA project: the Mammalian Gene Collection (MGC).</title>
        <authorList>
            <consortium name="The MGC Project Team"/>
        </authorList>
    </citation>
    <scope>NUCLEOTIDE SEQUENCE [LARGE SCALE MRNA]</scope>
</reference>
<reference key="4">
    <citation type="submission" date="2009-01" db="UniProtKB">
        <authorList>
            <person name="Lubec G."/>
            <person name="Sunyer B."/>
            <person name="Chen W.-Q."/>
        </authorList>
    </citation>
    <scope>PROTEIN SEQUENCE OF 140-152; 231-255 AND 273-287</scope>
    <scope>IDENTIFICATION BY MASS SPECTROMETRY</scope>
    <source>
        <strain>OF1</strain>
        <tissue>Hippocampus</tissue>
    </source>
</reference>
<reference key="5">
    <citation type="journal article" date="2010" name="Cell">
        <title>A tissue-specific atlas of mouse protein phosphorylation and expression.</title>
        <authorList>
            <person name="Huttlin E.L."/>
            <person name="Jedrychowski M.P."/>
            <person name="Elias J.E."/>
            <person name="Goswami T."/>
            <person name="Rad R."/>
            <person name="Beausoleil S.A."/>
            <person name="Villen J."/>
            <person name="Haas W."/>
            <person name="Sowa M.E."/>
            <person name="Gygi S.P."/>
        </authorList>
    </citation>
    <scope>IDENTIFICATION BY MASS SPECTROMETRY [LARGE SCALE ANALYSIS]</scope>
    <source>
        <tissue>Brain</tissue>
        <tissue>Brown adipose tissue</tissue>
        <tissue>Heart</tissue>
        <tissue>Kidney</tissue>
        <tissue>Liver</tissue>
        <tissue>Lung</tissue>
        <tissue>Pancreas</tissue>
        <tissue>Spleen</tissue>
        <tissue>Testis</tissue>
    </source>
</reference>
<reference key="6">
    <citation type="journal article" date="2013" name="Mol. Cell">
        <title>SIRT5-mediated lysine desuccinylation impacts diverse metabolic pathways.</title>
        <authorList>
            <person name="Park J."/>
            <person name="Chen Y."/>
            <person name="Tishkoff D.X."/>
            <person name="Peng C."/>
            <person name="Tan M."/>
            <person name="Dai L."/>
            <person name="Xie Z."/>
            <person name="Zhang Y."/>
            <person name="Zwaans B.M."/>
            <person name="Skinner M.E."/>
            <person name="Lombard D.B."/>
            <person name="Zhao Y."/>
        </authorList>
    </citation>
    <scope>ACETYLATION [LARGE SCALE ANALYSIS] AT LYS-39 AND LYS-152</scope>
    <scope>IDENTIFICATION BY MASS SPECTROMETRY [LARGE SCALE ANALYSIS]</scope>
    <source>
        <tissue>Embryonic fibroblast</tissue>
    </source>
</reference>
<proteinExistence type="evidence at protein level"/>
<evidence type="ECO:0000250" key="1"/>
<evidence type="ECO:0000250" key="2">
    <source>
        <dbReference type="UniProtKB" id="O35824"/>
    </source>
</evidence>
<evidence type="ECO:0000250" key="3">
    <source>
        <dbReference type="UniProtKB" id="O60884"/>
    </source>
</evidence>
<evidence type="ECO:0000256" key="4">
    <source>
        <dbReference type="SAM" id="MobiDB-lite"/>
    </source>
</evidence>
<evidence type="ECO:0000305" key="5"/>
<evidence type="ECO:0007744" key="6">
    <source>
    </source>
</evidence>
<sequence>MANVADTKLYDILGVPPGASENELKKAYRKLAKEYHPDKNPNAGDKFKEISFAYEVLSNPEKRELYDRYGEQGLREGSGGGGGMDDIFSHIFGGGLFGFMGNQSRSRNGRRRGEDMMHPLKVSLEDLYNGKTTKLQLSKNVLCSACSGQGGKSGAVQKCSACRGRGVRIMIRQLAPGMVQQMQSVCSDCNGEGEVINEKDRCKKCEGKKVIKEVKILEVHVDKGMKHGQRITFTGEADQAPGVEPGDIVLLLQEKEHEVFQRDGNDLHMTYKIGLVEALCGFQFTFKHLDARQIVVKYPPGKVIEPGCVRVVRGEGMPQYRNPFEKGDLYIKFDVQFPENNWINPDKLSELEDLLPSRPEVPNVIGETEEVELQEFDSTRGSGGGQRREAYNDSSDEESSSHHGPGVQCAHQ</sequence>
<protein>
    <recommendedName>
        <fullName>DnaJ homolog subfamily A member 2</fullName>
    </recommendedName>
    <alternativeName>
        <fullName>mDj3</fullName>
    </alternativeName>
</protein>